<feature type="chain" id="PRO_0000072173" description="Transcription elongation factor SPT6">
    <location>
        <begin position="1"/>
        <end position="1451"/>
    </location>
</feature>
<feature type="domain" description="SH2" evidence="2">
    <location>
        <begin position="1257"/>
        <end position="1354"/>
    </location>
</feature>
<feature type="region of interest" description="Disordered" evidence="3">
    <location>
        <begin position="1"/>
        <end position="217"/>
    </location>
</feature>
<feature type="short sequence motif" description="Nuclear localization signal" evidence="1">
    <location>
        <begin position="8"/>
        <end position="12"/>
    </location>
</feature>
<feature type="short sequence motif" description="Nuclear localization signal" evidence="1">
    <location>
        <begin position="77"/>
        <end position="85"/>
    </location>
</feature>
<feature type="short sequence motif" description="Nuclear localization signal" evidence="1">
    <location>
        <begin position="120"/>
        <end position="125"/>
    </location>
</feature>
<feature type="compositionally biased region" description="Basic and acidic residues" evidence="3">
    <location>
        <begin position="1"/>
        <end position="12"/>
    </location>
</feature>
<feature type="compositionally biased region" description="Acidic residues" evidence="3">
    <location>
        <begin position="29"/>
        <end position="51"/>
    </location>
</feature>
<feature type="compositionally biased region" description="Basic residues" evidence="3">
    <location>
        <begin position="76"/>
        <end position="85"/>
    </location>
</feature>
<feature type="compositionally biased region" description="Acidic residues" evidence="3">
    <location>
        <begin position="88"/>
        <end position="100"/>
    </location>
</feature>
<feature type="compositionally biased region" description="Acidic residues" evidence="3">
    <location>
        <begin position="153"/>
        <end position="162"/>
    </location>
</feature>
<feature type="compositionally biased region" description="Basic and acidic residues" evidence="3">
    <location>
        <begin position="180"/>
        <end position="192"/>
    </location>
</feature>
<feature type="compositionally biased region" description="Acidic residues" evidence="3">
    <location>
        <begin position="194"/>
        <end position="211"/>
    </location>
</feature>
<feature type="modified residue" description="Phosphoserine" evidence="13 14 15 16">
    <location>
        <position position="94"/>
    </location>
</feature>
<feature type="modified residue" description="Phosphoserine" evidence="14 15 16">
    <location>
        <position position="134"/>
    </location>
</feature>
<feature type="modified residue" description="Phosphoserine" evidence="14 15 16">
    <location>
        <position position="136"/>
    </location>
</feature>
<feature type="modified residue" description="Phosphoserine" evidence="16">
    <location>
        <position position="148"/>
    </location>
</feature>
<feature type="modified residue" description="Phosphoserine" evidence="14 15 16">
    <location>
        <position position="155"/>
    </location>
</feature>
<feature type="modified residue" description="Phosphoserine" evidence="14 15 16">
    <location>
        <position position="206"/>
    </location>
</feature>
<feature type="modified residue" description="Phosphoserine" evidence="16">
    <location>
        <position position="295"/>
    </location>
</feature>
<feature type="helix" evidence="18">
    <location>
        <begin position="239"/>
        <end position="249"/>
    </location>
</feature>
<feature type="helix" evidence="18">
    <location>
        <begin position="256"/>
        <end position="262"/>
    </location>
</feature>
<feature type="helix" evidence="19">
    <location>
        <begin position="301"/>
        <end position="308"/>
    </location>
</feature>
<feature type="helix" evidence="19">
    <location>
        <begin position="312"/>
        <end position="319"/>
    </location>
</feature>
<feature type="strand" evidence="19">
    <location>
        <begin position="320"/>
        <end position="322"/>
    </location>
</feature>
<feature type="helix" evidence="19">
    <location>
        <begin position="324"/>
        <end position="329"/>
    </location>
</feature>
<feature type="helix" evidence="19">
    <location>
        <begin position="330"/>
        <end position="332"/>
    </location>
</feature>
<feature type="turn" evidence="19">
    <location>
        <begin position="334"/>
        <end position="337"/>
    </location>
</feature>
<feature type="helix" evidence="19">
    <location>
        <begin position="341"/>
        <end position="359"/>
    </location>
</feature>
<feature type="helix" evidence="19">
    <location>
        <begin position="368"/>
        <end position="382"/>
    </location>
</feature>
<feature type="helix" evidence="19">
    <location>
        <begin position="388"/>
        <end position="394"/>
    </location>
</feature>
<feature type="helix" evidence="19">
    <location>
        <begin position="396"/>
        <end position="398"/>
    </location>
</feature>
<feature type="strand" evidence="20">
    <location>
        <begin position="402"/>
        <end position="406"/>
    </location>
</feature>
<feature type="helix" evidence="19">
    <location>
        <begin position="411"/>
        <end position="441"/>
    </location>
</feature>
<feature type="helix" evidence="19">
    <location>
        <begin position="446"/>
        <end position="454"/>
    </location>
</feature>
<feature type="helix" evidence="19">
    <location>
        <begin position="465"/>
        <end position="476"/>
    </location>
</feature>
<feature type="helix" evidence="19">
    <location>
        <begin position="478"/>
        <end position="483"/>
    </location>
</feature>
<feature type="helix" evidence="19">
    <location>
        <begin position="502"/>
        <end position="505"/>
    </location>
</feature>
<feature type="helix" evidence="19">
    <location>
        <begin position="511"/>
        <end position="515"/>
    </location>
</feature>
<feature type="helix" evidence="19">
    <location>
        <begin position="521"/>
        <end position="530"/>
    </location>
</feature>
<feature type="strand" evidence="20">
    <location>
        <begin position="541"/>
        <end position="543"/>
    </location>
</feature>
<feature type="helix" evidence="19">
    <location>
        <begin position="545"/>
        <end position="554"/>
    </location>
</feature>
<feature type="turn" evidence="19">
    <location>
        <begin position="555"/>
        <end position="559"/>
    </location>
</feature>
<feature type="helix" evidence="19">
    <location>
        <begin position="568"/>
        <end position="583"/>
    </location>
</feature>
<feature type="helix" evidence="19">
    <location>
        <begin position="586"/>
        <end position="598"/>
    </location>
</feature>
<feature type="strand" evidence="19">
    <location>
        <begin position="599"/>
        <end position="606"/>
    </location>
</feature>
<feature type="helix" evidence="19">
    <location>
        <begin position="608"/>
        <end position="613"/>
    </location>
</feature>
<feature type="turn" evidence="19">
    <location>
        <begin position="615"/>
        <end position="617"/>
    </location>
</feature>
<feature type="turn" evidence="19">
    <location>
        <begin position="619"/>
        <end position="625"/>
    </location>
</feature>
<feature type="helix" evidence="19">
    <location>
        <begin position="633"/>
        <end position="636"/>
    </location>
</feature>
<feature type="helix" evidence="19">
    <location>
        <begin position="639"/>
        <end position="649"/>
    </location>
</feature>
<feature type="strand" evidence="19">
    <location>
        <begin position="652"/>
        <end position="659"/>
    </location>
</feature>
<feature type="helix" evidence="19">
    <location>
        <begin position="662"/>
        <end position="673"/>
    </location>
</feature>
<feature type="helix" evidence="19">
    <location>
        <begin position="681"/>
        <end position="733"/>
    </location>
</feature>
<feature type="strand" evidence="20">
    <location>
        <begin position="740"/>
        <end position="744"/>
    </location>
</feature>
<feature type="strand" evidence="19">
    <location>
        <begin position="750"/>
        <end position="754"/>
    </location>
</feature>
<feature type="turn" evidence="19">
    <location>
        <begin position="760"/>
        <end position="762"/>
    </location>
</feature>
<feature type="strand" evidence="19">
    <location>
        <begin position="765"/>
        <end position="770"/>
    </location>
</feature>
<feature type="strand" evidence="19">
    <location>
        <begin position="776"/>
        <end position="782"/>
    </location>
</feature>
<feature type="helix" evidence="19">
    <location>
        <begin position="793"/>
        <end position="806"/>
    </location>
</feature>
<feature type="strand" evidence="19">
    <location>
        <begin position="809"/>
        <end position="813"/>
    </location>
</feature>
<feature type="helix" evidence="19">
    <location>
        <begin position="819"/>
        <end position="833"/>
    </location>
</feature>
<feature type="strand" evidence="20">
    <location>
        <begin position="839"/>
        <end position="841"/>
    </location>
</feature>
<feature type="strand" evidence="19">
    <location>
        <begin position="846"/>
        <end position="848"/>
    </location>
</feature>
<feature type="helix" evidence="19">
    <location>
        <begin position="854"/>
        <end position="858"/>
    </location>
</feature>
<feature type="helix" evidence="19">
    <location>
        <begin position="861"/>
        <end position="866"/>
    </location>
</feature>
<feature type="helix" evidence="19">
    <location>
        <begin position="872"/>
        <end position="885"/>
    </location>
</feature>
<feature type="helix" evidence="19">
    <location>
        <begin position="887"/>
        <end position="892"/>
    </location>
</feature>
<feature type="helix" evidence="19">
    <location>
        <begin position="896"/>
        <end position="900"/>
    </location>
</feature>
<feature type="helix" evidence="19">
    <location>
        <begin position="908"/>
        <end position="910"/>
    </location>
</feature>
<feature type="helix" evidence="19">
    <location>
        <begin position="913"/>
        <end position="931"/>
    </location>
</feature>
<feature type="helix" evidence="19">
    <location>
        <begin position="935"/>
        <end position="939"/>
    </location>
</feature>
<feature type="helix" evidence="19">
    <location>
        <begin position="942"/>
        <end position="945"/>
    </location>
</feature>
<feature type="helix" evidence="19">
    <location>
        <begin position="946"/>
        <end position="950"/>
    </location>
</feature>
<feature type="helix" evidence="19">
    <location>
        <begin position="956"/>
        <end position="968"/>
    </location>
</feature>
<feature type="helix" evidence="19">
    <location>
        <begin position="978"/>
        <end position="981"/>
    </location>
</feature>
<feature type="helix" evidence="19">
    <location>
        <begin position="987"/>
        <end position="993"/>
    </location>
</feature>
<feature type="turn" evidence="19">
    <location>
        <begin position="994"/>
        <end position="996"/>
    </location>
</feature>
<feature type="helix" evidence="19">
    <location>
        <begin position="1015"/>
        <end position="1018"/>
    </location>
</feature>
<feature type="helix" evidence="19">
    <location>
        <begin position="1023"/>
        <end position="1025"/>
    </location>
</feature>
<feature type="helix" evidence="19">
    <location>
        <begin position="1026"/>
        <end position="1036"/>
    </location>
</feature>
<feature type="helix" evidence="19">
    <location>
        <begin position="1041"/>
        <end position="1050"/>
    </location>
</feature>
<feature type="helix" evidence="19">
    <location>
        <begin position="1055"/>
        <end position="1062"/>
    </location>
</feature>
<feature type="helix" evidence="19">
    <location>
        <begin position="1066"/>
        <end position="1070"/>
    </location>
</feature>
<feature type="helix" evidence="19">
    <location>
        <begin position="1075"/>
        <end position="1086"/>
    </location>
</feature>
<feature type="helix" evidence="19">
    <location>
        <begin position="1091"/>
        <end position="1102"/>
    </location>
</feature>
<feature type="strand" evidence="20">
    <location>
        <begin position="1103"/>
        <end position="1105"/>
    </location>
</feature>
<feature type="helix" evidence="19">
    <location>
        <begin position="1117"/>
        <end position="1125"/>
    </location>
</feature>
<feature type="turn" evidence="20">
    <location>
        <begin position="1129"/>
        <end position="1131"/>
    </location>
</feature>
<feature type="strand" evidence="20">
    <location>
        <begin position="1137"/>
        <end position="1145"/>
    </location>
</feature>
<feature type="strand" evidence="20">
    <location>
        <begin position="1150"/>
        <end position="1153"/>
    </location>
</feature>
<feature type="strand" evidence="20">
    <location>
        <begin position="1159"/>
        <end position="1162"/>
    </location>
</feature>
<feature type="strand" evidence="20">
    <location>
        <begin position="1166"/>
        <end position="1169"/>
    </location>
</feature>
<feature type="turn" evidence="20">
    <location>
        <begin position="1177"/>
        <end position="1179"/>
    </location>
</feature>
<feature type="strand" evidence="20">
    <location>
        <begin position="1185"/>
        <end position="1194"/>
    </location>
</feature>
<feature type="helix" evidence="20">
    <location>
        <begin position="1195"/>
        <end position="1197"/>
    </location>
</feature>
<feature type="strand" evidence="20">
    <location>
        <begin position="1199"/>
        <end position="1203"/>
    </location>
</feature>
<feature type="helix" evidence="20">
    <location>
        <begin position="1206"/>
        <end position="1209"/>
    </location>
</feature>
<feature type="turn" evidence="19">
    <location>
        <begin position="1222"/>
        <end position="1224"/>
    </location>
</feature>
<feature type="helix" evidence="19">
    <location>
        <begin position="1227"/>
        <end position="1246"/>
    </location>
</feature>
<feature type="turn" evidence="21">
    <location>
        <begin position="1247"/>
        <end position="1249"/>
    </location>
</feature>
<feature type="strand" evidence="17">
    <location>
        <begin position="1253"/>
        <end position="1255"/>
    </location>
</feature>
<feature type="helix" evidence="22">
    <location>
        <begin position="1264"/>
        <end position="1271"/>
    </location>
</feature>
<feature type="strand" evidence="22">
    <location>
        <begin position="1279"/>
        <end position="1283"/>
    </location>
</feature>
<feature type="turn" evidence="17">
    <location>
        <begin position="1285"/>
        <end position="1287"/>
    </location>
</feature>
<feature type="strand" evidence="22">
    <location>
        <begin position="1290"/>
        <end position="1298"/>
    </location>
</feature>
<feature type="strand" evidence="22">
    <location>
        <begin position="1301"/>
        <end position="1311"/>
    </location>
</feature>
<feature type="strand" evidence="22">
    <location>
        <begin position="1313"/>
        <end position="1317"/>
    </location>
</feature>
<feature type="strand" evidence="22">
    <location>
        <begin position="1320"/>
        <end position="1324"/>
    </location>
</feature>
<feature type="strand" evidence="22">
    <location>
        <begin position="1327"/>
        <end position="1331"/>
    </location>
</feature>
<feature type="helix" evidence="22">
    <location>
        <begin position="1332"/>
        <end position="1338"/>
    </location>
</feature>
<feature type="helix" evidence="22">
    <location>
        <begin position="1340"/>
        <end position="1351"/>
    </location>
</feature>
<feature type="helix" evidence="22">
    <location>
        <begin position="1361"/>
        <end position="1374"/>
    </location>
</feature>
<feature type="strand" evidence="22">
    <location>
        <begin position="1380"/>
        <end position="1385"/>
    </location>
</feature>
<feature type="strand" evidence="22">
    <location>
        <begin position="1387"/>
        <end position="1389"/>
    </location>
</feature>
<feature type="strand" evidence="22">
    <location>
        <begin position="1392"/>
        <end position="1400"/>
    </location>
</feature>
<feature type="strand" evidence="22">
    <location>
        <begin position="1406"/>
        <end position="1412"/>
    </location>
</feature>
<feature type="strand" evidence="22">
    <location>
        <begin position="1414"/>
        <end position="1419"/>
    </location>
</feature>
<feature type="strand" evidence="22">
    <location>
        <begin position="1422"/>
        <end position="1426"/>
    </location>
</feature>
<feature type="helix" evidence="22">
    <location>
        <begin position="1427"/>
        <end position="1445"/>
    </location>
</feature>
<name>SPT6_YEAST</name>
<gene>
    <name type="primary">SPT6</name>
    <name type="synonym">CRE2</name>
    <name type="synonym">SSN20</name>
    <name type="ordered locus">YGR116W</name>
    <name type="ORF">G6169</name>
</gene>
<reference key="1">
    <citation type="journal article" date="1990" name="Mol. Cell. Biol.">
        <title>SPT6, an essential gene that affects transcription in Saccharomyces cerevisiae, encodes a nuclear protein with an extremely acidic amino terminus.</title>
        <authorList>
            <person name="Swanson M.S."/>
            <person name="Carlson M."/>
            <person name="Winston F."/>
        </authorList>
    </citation>
    <scope>NUCLEOTIDE SEQUENCE [GENOMIC DNA]</scope>
    <scope>SUBCELLULAR LOCATION</scope>
</reference>
<reference key="2">
    <citation type="journal article" date="1996" name="Yeast">
        <title>The sequence of a 23.4 kb segment on the right arm of chromosome VII from Saccharomyces cerevisiae reveals CLB6, SPT6, RP28A and NUP57 genes, a Ty3 element and 11 new open reading frames.</title>
        <authorList>
            <person name="Hansen M."/>
            <person name="Albers M."/>
            <person name="Backes U."/>
            <person name="Coblenz A."/>
            <person name="Leuther H."/>
            <person name="Neu R."/>
            <person name="Schreer A."/>
            <person name="Schaefer B."/>
            <person name="Zimmermann M."/>
            <person name="Wolf K."/>
        </authorList>
    </citation>
    <scope>NUCLEOTIDE SEQUENCE [GENOMIC DNA]</scope>
</reference>
<reference key="3">
    <citation type="journal article" date="1997" name="Nature">
        <title>The nucleotide sequence of Saccharomyces cerevisiae chromosome VII.</title>
        <authorList>
            <person name="Tettelin H."/>
            <person name="Agostoni-Carbone M.L."/>
            <person name="Albermann K."/>
            <person name="Albers M."/>
            <person name="Arroyo J."/>
            <person name="Backes U."/>
            <person name="Barreiros T."/>
            <person name="Bertani I."/>
            <person name="Bjourson A.J."/>
            <person name="Brueckner M."/>
            <person name="Bruschi C.V."/>
            <person name="Carignani G."/>
            <person name="Castagnoli L."/>
            <person name="Cerdan E."/>
            <person name="Clemente M.L."/>
            <person name="Coblenz A."/>
            <person name="Coglievina M."/>
            <person name="Coissac E."/>
            <person name="Defoor E."/>
            <person name="Del Bino S."/>
            <person name="Delius H."/>
            <person name="Delneri D."/>
            <person name="de Wergifosse P."/>
            <person name="Dujon B."/>
            <person name="Durand P."/>
            <person name="Entian K.-D."/>
            <person name="Eraso P."/>
            <person name="Escribano V."/>
            <person name="Fabiani L."/>
            <person name="Fartmann B."/>
            <person name="Feroli F."/>
            <person name="Feuermann M."/>
            <person name="Frontali L."/>
            <person name="Garcia-Gonzalez M."/>
            <person name="Garcia-Saez M.I."/>
            <person name="Goffeau A."/>
            <person name="Guerreiro P."/>
            <person name="Hani J."/>
            <person name="Hansen M."/>
            <person name="Hebling U."/>
            <person name="Hernandez K."/>
            <person name="Heumann K."/>
            <person name="Hilger F."/>
            <person name="Hofmann B."/>
            <person name="Indge K.J."/>
            <person name="James C.M."/>
            <person name="Klima R."/>
            <person name="Koetter P."/>
            <person name="Kramer B."/>
            <person name="Kramer W."/>
            <person name="Lauquin G."/>
            <person name="Leuther H."/>
            <person name="Louis E.J."/>
            <person name="Maillier E."/>
            <person name="Marconi A."/>
            <person name="Martegani E."/>
            <person name="Mazon M.J."/>
            <person name="Mazzoni C."/>
            <person name="McReynolds A.D.K."/>
            <person name="Melchioretto P."/>
            <person name="Mewes H.-W."/>
            <person name="Minenkova O."/>
            <person name="Mueller-Auer S."/>
            <person name="Nawrocki A."/>
            <person name="Netter P."/>
            <person name="Neu R."/>
            <person name="Nombela C."/>
            <person name="Oliver S.G."/>
            <person name="Panzeri L."/>
            <person name="Paoluzi S."/>
            <person name="Plevani P."/>
            <person name="Portetelle D."/>
            <person name="Portillo F."/>
            <person name="Potier S."/>
            <person name="Purnelle B."/>
            <person name="Rieger M."/>
            <person name="Riles L."/>
            <person name="Rinaldi T."/>
            <person name="Robben J."/>
            <person name="Rodrigues-Pousada C."/>
            <person name="Rodriguez-Belmonte E."/>
            <person name="Rodriguez-Torres A.M."/>
            <person name="Rose M."/>
            <person name="Ruzzi M."/>
            <person name="Saliola M."/>
            <person name="Sanchez-Perez M."/>
            <person name="Schaefer B."/>
            <person name="Schaefer M."/>
            <person name="Scharfe M."/>
            <person name="Schmidheini T."/>
            <person name="Schreer A."/>
            <person name="Skala J."/>
            <person name="Souciet J.-L."/>
            <person name="Steensma H.Y."/>
            <person name="Talla E."/>
            <person name="Thierry A."/>
            <person name="Vandenbol M."/>
            <person name="van der Aart Q.J.M."/>
            <person name="Van Dyck L."/>
            <person name="Vanoni M."/>
            <person name="Verhasselt P."/>
            <person name="Voet M."/>
            <person name="Volckaert G."/>
            <person name="Wambutt R."/>
            <person name="Watson M.D."/>
            <person name="Weber N."/>
            <person name="Wedler E."/>
            <person name="Wedler H."/>
            <person name="Wipfli P."/>
            <person name="Wolf K."/>
            <person name="Wright L.F."/>
            <person name="Zaccaria P."/>
            <person name="Zimmermann M."/>
            <person name="Zollner A."/>
            <person name="Kleine K."/>
        </authorList>
    </citation>
    <scope>NUCLEOTIDE SEQUENCE [LARGE SCALE GENOMIC DNA]</scope>
    <source>
        <strain>ATCC 204508 / S288c</strain>
    </source>
</reference>
<reference key="4">
    <citation type="journal article" date="2014" name="G3 (Bethesda)">
        <title>The reference genome sequence of Saccharomyces cerevisiae: Then and now.</title>
        <authorList>
            <person name="Engel S.R."/>
            <person name="Dietrich F.S."/>
            <person name="Fisk D.G."/>
            <person name="Binkley G."/>
            <person name="Balakrishnan R."/>
            <person name="Costanzo M.C."/>
            <person name="Dwight S.S."/>
            <person name="Hitz B.C."/>
            <person name="Karra K."/>
            <person name="Nash R.S."/>
            <person name="Weng S."/>
            <person name="Wong E.D."/>
            <person name="Lloyd P."/>
            <person name="Skrzypek M.S."/>
            <person name="Miyasato S.R."/>
            <person name="Simison M."/>
            <person name="Cherry J.M."/>
        </authorList>
    </citation>
    <scope>GENOME REANNOTATION</scope>
    <source>
        <strain>ATCC 204508 / S288c</strain>
    </source>
</reference>
<reference key="5">
    <citation type="journal article" date="1993" name="Trends Biochem. Sci.">
        <title>A yeast SH2 domain.</title>
        <authorList>
            <person name="McLennan A.J."/>
            <person name="Shaw G."/>
        </authorList>
    </citation>
    <scope>DOMAIN SH2</scope>
</reference>
<reference key="6">
    <citation type="journal article" date="1998" name="Genes Dev.">
        <title>Evidence that Spt4, Spt5, and Spt6 control transcription elongation by RNA polymerase II in Saccharomyces cerevisiae.</title>
        <authorList>
            <person name="Hartzog G.A."/>
            <person name="Wada T."/>
            <person name="Handa H."/>
            <person name="Winston F."/>
        </authorList>
    </citation>
    <scope>FUNCTION IN TRANSCRIPTION ELONGATION</scope>
</reference>
<reference key="7">
    <citation type="journal article" date="2003" name="Nature">
        <title>Global analysis of protein localization in budding yeast.</title>
        <authorList>
            <person name="Huh W.-K."/>
            <person name="Falvo J.V."/>
            <person name="Gerke L.C."/>
            <person name="Carroll A.S."/>
            <person name="Howson R.W."/>
            <person name="Weissman J.S."/>
            <person name="O'Shea E.K."/>
        </authorList>
    </citation>
    <scope>SUBCELLULAR LOCATION [LARGE SCALE ANALYSIS]</scope>
</reference>
<reference key="8">
    <citation type="journal article" date="2003" name="Nature">
        <title>Global analysis of protein expression in yeast.</title>
        <authorList>
            <person name="Ghaemmaghami S."/>
            <person name="Huh W.-K."/>
            <person name="Bower K."/>
            <person name="Howson R.W."/>
            <person name="Belle A."/>
            <person name="Dephoure N."/>
            <person name="O'Shea E.K."/>
            <person name="Weissman J.S."/>
        </authorList>
    </citation>
    <scope>LEVEL OF PROTEIN EXPRESSION [LARGE SCALE ANALYSIS]</scope>
</reference>
<reference key="9">
    <citation type="journal article" date="2003" name="Science">
        <title>Transcription elongation factors repress transcription initiation from cryptic sites.</title>
        <authorList>
            <person name="Kaplan C.D."/>
            <person name="Laprade L."/>
            <person name="Winston F."/>
        </authorList>
    </citation>
    <scope>FUNCTION</scope>
</reference>
<reference key="10">
    <citation type="journal article" date="2005" name="J. Biol. Chem.">
        <title>Interaction between transcription elongation factors and mRNA 3'-end formation at the Saccharomyces cerevisiae GAL10-GAL7 locus.</title>
        <authorList>
            <person name="Kaplan C.D."/>
            <person name="Holland M.J."/>
            <person name="Winston F."/>
        </authorList>
    </citation>
    <scope>FUNCTION</scope>
    <scope>INTERACTION WITH CTR9</scope>
</reference>
<reference key="11">
    <citation type="journal article" date="2006" name="Mol. Cell">
        <title>Transcriptional activators are dispensable for transcription in the absence of Spt6-mediated chromatin reassembly of promoter regions.</title>
        <authorList>
            <person name="Adkins M.W."/>
            <person name="Tyler J.K."/>
        </authorList>
    </citation>
    <scope>FUNCTION IN NUCLEOSOME REASSEMBLY</scope>
</reference>
<reference key="12">
    <citation type="journal article" date="2007" name="J. Proteome Res.">
        <title>Large-scale phosphorylation analysis of alpha-factor-arrested Saccharomyces cerevisiae.</title>
        <authorList>
            <person name="Li X."/>
            <person name="Gerber S.A."/>
            <person name="Rudner A.D."/>
            <person name="Beausoleil S.A."/>
            <person name="Haas W."/>
            <person name="Villen J."/>
            <person name="Elias J.E."/>
            <person name="Gygi S.P."/>
        </authorList>
    </citation>
    <scope>PHOSPHORYLATION [LARGE SCALE ANALYSIS] AT SER-94; SER-134; SER-136; SER-155 AND SER-206</scope>
    <scope>IDENTIFICATION BY MASS SPECTROMETRY [LARGE SCALE ANALYSIS]</scope>
    <source>
        <strain>ADR376</strain>
    </source>
</reference>
<reference key="13">
    <citation type="journal article" date="2007" name="Proc. Natl. Acad. Sci. U.S.A.">
        <title>Analysis of phosphorylation sites on proteins from Saccharomyces cerevisiae by electron transfer dissociation (ETD) mass spectrometry.</title>
        <authorList>
            <person name="Chi A."/>
            <person name="Huttenhower C."/>
            <person name="Geer L.Y."/>
            <person name="Coon J.J."/>
            <person name="Syka J.E.P."/>
            <person name="Bai D.L."/>
            <person name="Shabanowitz J."/>
            <person name="Burke D.J."/>
            <person name="Troyanskaya O.G."/>
            <person name="Hunt D.F."/>
        </authorList>
    </citation>
    <scope>PHOSPHORYLATION [LARGE SCALE ANALYSIS] AT SER-94</scope>
    <scope>IDENTIFICATION BY MASS SPECTROMETRY [LARGE SCALE ANALYSIS]</scope>
</reference>
<reference key="14">
    <citation type="journal article" date="2008" name="Mol. Cell. Proteomics">
        <title>A multidimensional chromatography technology for in-depth phosphoproteome analysis.</title>
        <authorList>
            <person name="Albuquerque C.P."/>
            <person name="Smolka M.B."/>
            <person name="Payne S.H."/>
            <person name="Bafna V."/>
            <person name="Eng J."/>
            <person name="Zhou H."/>
        </authorList>
    </citation>
    <scope>PHOSPHORYLATION [LARGE SCALE ANALYSIS] AT SER-94; SER-134; SER-136; SER-155 AND SER-206</scope>
    <scope>IDENTIFICATION BY MASS SPECTROMETRY [LARGE SCALE ANALYSIS]</scope>
</reference>
<reference key="15">
    <citation type="journal article" date="2009" name="Mol. Cell">
        <title>Two-color cell array screen reveals interdependent roles for histone chaperones and a chromatin boundary regulator in histone gene repression.</title>
        <authorList>
            <person name="Fillingham J."/>
            <person name="Kainth P."/>
            <person name="Lambert J.P."/>
            <person name="van Bakel H."/>
            <person name="Tsui K."/>
            <person name="Pena-Castillo L."/>
            <person name="Nislow C."/>
            <person name="Figeys D."/>
            <person name="Hughes T.R."/>
            <person name="Greenblatt J."/>
            <person name="Andrews B.J."/>
        </authorList>
    </citation>
    <scope>SUBCELLULAR LOCATION</scope>
</reference>
<reference key="16">
    <citation type="journal article" date="2009" name="Science">
        <title>Global analysis of Cdk1 substrate phosphorylation sites provides insights into evolution.</title>
        <authorList>
            <person name="Holt L.J."/>
            <person name="Tuch B.B."/>
            <person name="Villen J."/>
            <person name="Johnson A.D."/>
            <person name="Gygi S.P."/>
            <person name="Morgan D.O."/>
        </authorList>
    </citation>
    <scope>PHOSPHORYLATION [LARGE SCALE ANALYSIS] AT SER-94; SER-134; SER-136; SER-148; SER-155; SER-206 AND SER-295</scope>
    <scope>IDENTIFICATION BY MASS SPECTROMETRY [LARGE SCALE ANALYSIS]</scope>
</reference>
<accession>P23615</accession>
<accession>D6VUP7</accession>
<dbReference type="EMBL" id="M34391">
    <property type="protein sequence ID" value="AAA35086.1"/>
    <property type="molecule type" value="Genomic_DNA"/>
</dbReference>
<dbReference type="EMBL" id="Z72899">
    <property type="protein sequence ID" value="CAA97124.1"/>
    <property type="molecule type" value="Genomic_DNA"/>
</dbReference>
<dbReference type="EMBL" id="Z72902">
    <property type="protein sequence ID" value="CAA97127.1"/>
    <property type="molecule type" value="Genomic_DNA"/>
</dbReference>
<dbReference type="EMBL" id="BK006941">
    <property type="protein sequence ID" value="DAA08208.1"/>
    <property type="molecule type" value="Genomic_DNA"/>
</dbReference>
<dbReference type="PIR" id="A36468">
    <property type="entry name" value="A36468"/>
</dbReference>
<dbReference type="RefSeq" id="NP_011631.1">
    <property type="nucleotide sequence ID" value="NM_001181245.1"/>
</dbReference>
<dbReference type="PDB" id="2L3T">
    <property type="method" value="NMR"/>
    <property type="chains" value="A=1250-1440"/>
</dbReference>
<dbReference type="PDB" id="3OAK">
    <property type="method" value="X-ray"/>
    <property type="resolution" value="2.15 A"/>
    <property type="chains" value="C/D=239-263"/>
</dbReference>
<dbReference type="PDB" id="3PSF">
    <property type="method" value="X-ray"/>
    <property type="resolution" value="2.59 A"/>
    <property type="chains" value="A=235-1259"/>
</dbReference>
<dbReference type="PDB" id="3PSI">
    <property type="method" value="X-ray"/>
    <property type="resolution" value="3.30 A"/>
    <property type="chains" value="A=239-1451"/>
</dbReference>
<dbReference type="PDB" id="3PSJ">
    <property type="method" value="X-ray"/>
    <property type="resolution" value="2.70 A"/>
    <property type="chains" value="A=1247-1451"/>
</dbReference>
<dbReference type="PDB" id="3PSK">
    <property type="method" value="X-ray"/>
    <property type="resolution" value="2.10 A"/>
    <property type="chains" value="A/B/C/D=1247-1451"/>
</dbReference>
<dbReference type="PDB" id="5VKL">
    <property type="method" value="X-ray"/>
    <property type="resolution" value="2.20 A"/>
    <property type="chains" value="A=1247-1451"/>
</dbReference>
<dbReference type="PDB" id="5VKO">
    <property type="method" value="X-ray"/>
    <property type="resolution" value="1.80 A"/>
    <property type="chains" value="A=1247-1451"/>
</dbReference>
<dbReference type="PDB" id="7O3D">
    <property type="method" value="EM"/>
    <property type="resolution" value="3.71 A"/>
    <property type="chains" value="A=298-1451"/>
</dbReference>
<dbReference type="PDB" id="7O6B">
    <property type="method" value="EM"/>
    <property type="resolution" value="3.88 A"/>
    <property type="chains" value="A=298-1451"/>
</dbReference>
<dbReference type="PDBsum" id="2L3T"/>
<dbReference type="PDBsum" id="3OAK"/>
<dbReference type="PDBsum" id="3PSF"/>
<dbReference type="PDBsum" id="3PSI"/>
<dbReference type="PDBsum" id="3PSJ"/>
<dbReference type="PDBsum" id="3PSK"/>
<dbReference type="PDBsum" id="5VKL"/>
<dbReference type="PDBsum" id="5VKO"/>
<dbReference type="PDBsum" id="7O3D"/>
<dbReference type="PDBsum" id="7O6B"/>
<dbReference type="BMRB" id="P23615"/>
<dbReference type="EMDB" id="EMD-12704"/>
<dbReference type="EMDB" id="EMD-12737"/>
<dbReference type="SASBDB" id="P23615"/>
<dbReference type="SMR" id="P23615"/>
<dbReference type="BioGRID" id="33361">
    <property type="interactions" value="218"/>
</dbReference>
<dbReference type="DIP" id="DIP-2630N"/>
<dbReference type="FunCoup" id="P23615">
    <property type="interactions" value="1448"/>
</dbReference>
<dbReference type="IntAct" id="P23615">
    <property type="interactions" value="46"/>
</dbReference>
<dbReference type="MINT" id="P23615"/>
<dbReference type="STRING" id="4932.YGR116W"/>
<dbReference type="iPTMnet" id="P23615"/>
<dbReference type="PaxDb" id="4932-YGR116W"/>
<dbReference type="PeptideAtlas" id="P23615"/>
<dbReference type="EnsemblFungi" id="YGR116W_mRNA">
    <property type="protein sequence ID" value="YGR116W"/>
    <property type="gene ID" value="YGR116W"/>
</dbReference>
<dbReference type="GeneID" id="853011"/>
<dbReference type="KEGG" id="sce:YGR116W"/>
<dbReference type="AGR" id="SGD:S000003348"/>
<dbReference type="SGD" id="S000003348">
    <property type="gene designation" value="SPT6"/>
</dbReference>
<dbReference type="VEuPathDB" id="FungiDB:YGR116W"/>
<dbReference type="eggNOG" id="KOG1856">
    <property type="taxonomic scope" value="Eukaryota"/>
</dbReference>
<dbReference type="GeneTree" id="ENSGT00510000047446"/>
<dbReference type="HOGENOM" id="CLU_001680_0_1_1"/>
<dbReference type="InParanoid" id="P23615"/>
<dbReference type="OMA" id="GYFYLCF"/>
<dbReference type="OrthoDB" id="995477at2759"/>
<dbReference type="BioCyc" id="YEAST:G3O-30823-MONOMER"/>
<dbReference type="BioGRID-ORCS" id="853011">
    <property type="hits" value="1 hit in 10 CRISPR screens"/>
</dbReference>
<dbReference type="EvolutionaryTrace" id="P23615"/>
<dbReference type="PRO" id="PR:P23615"/>
<dbReference type="Proteomes" id="UP000002311">
    <property type="component" value="Chromosome VII"/>
</dbReference>
<dbReference type="RNAct" id="P23615">
    <property type="molecule type" value="protein"/>
</dbReference>
<dbReference type="GO" id="GO:0000791">
    <property type="term" value="C:euchromatin"/>
    <property type="evidence" value="ECO:0000314"/>
    <property type="project" value="SGD"/>
</dbReference>
<dbReference type="GO" id="GO:0005739">
    <property type="term" value="C:mitochondrion"/>
    <property type="evidence" value="ECO:0007005"/>
    <property type="project" value="SGD"/>
</dbReference>
<dbReference type="GO" id="GO:0005634">
    <property type="term" value="C:nucleus"/>
    <property type="evidence" value="ECO:0000314"/>
    <property type="project" value="SGD"/>
</dbReference>
<dbReference type="GO" id="GO:0008023">
    <property type="term" value="C:transcription elongation factor complex"/>
    <property type="evidence" value="ECO:0000318"/>
    <property type="project" value="GO_Central"/>
</dbReference>
<dbReference type="GO" id="GO:0003677">
    <property type="term" value="F:DNA binding"/>
    <property type="evidence" value="ECO:0007669"/>
    <property type="project" value="InterPro"/>
</dbReference>
<dbReference type="GO" id="GO:0042393">
    <property type="term" value="F:histone binding"/>
    <property type="evidence" value="ECO:0000314"/>
    <property type="project" value="SGD"/>
</dbReference>
<dbReference type="GO" id="GO:0031491">
    <property type="term" value="F:nucleosome binding"/>
    <property type="evidence" value="ECO:0000314"/>
    <property type="project" value="SGD"/>
</dbReference>
<dbReference type="GO" id="GO:0001073">
    <property type="term" value="F:transcription antitermination factor activity, DNA binding"/>
    <property type="evidence" value="ECO:0000314"/>
    <property type="project" value="SGD"/>
</dbReference>
<dbReference type="GO" id="GO:0033554">
    <property type="term" value="P:cellular response to stress"/>
    <property type="evidence" value="ECO:0000315"/>
    <property type="project" value="SGD"/>
</dbReference>
<dbReference type="GO" id="GO:0006338">
    <property type="term" value="P:chromatin remodeling"/>
    <property type="evidence" value="ECO:0000315"/>
    <property type="project" value="SGD"/>
</dbReference>
<dbReference type="GO" id="GO:0000082">
    <property type="term" value="P:G1/S transition of mitotic cell cycle"/>
    <property type="evidence" value="ECO:0000315"/>
    <property type="project" value="SGD"/>
</dbReference>
<dbReference type="GO" id="GO:0000122">
    <property type="term" value="P:negative regulation of transcription by RNA polymerase II"/>
    <property type="evidence" value="ECO:0000315"/>
    <property type="project" value="SGD"/>
</dbReference>
<dbReference type="GO" id="GO:0006334">
    <property type="term" value="P:nucleosome assembly"/>
    <property type="evidence" value="ECO:0000314"/>
    <property type="project" value="SGD"/>
</dbReference>
<dbReference type="GO" id="GO:0034728">
    <property type="term" value="P:nucleosome organization"/>
    <property type="evidence" value="ECO:0000315"/>
    <property type="project" value="SGD"/>
</dbReference>
<dbReference type="GO" id="GO:0016973">
    <property type="term" value="P:poly(A)+ mRNA export from nucleus"/>
    <property type="evidence" value="ECO:0000315"/>
    <property type="project" value="SGD"/>
</dbReference>
<dbReference type="GO" id="GO:0032968">
    <property type="term" value="P:positive regulation of transcription elongation by RNA polymerase II"/>
    <property type="evidence" value="ECO:0000314"/>
    <property type="project" value="SGD"/>
</dbReference>
<dbReference type="GO" id="GO:0031440">
    <property type="term" value="P:regulation of mRNA 3'-end processing"/>
    <property type="evidence" value="ECO:0000315"/>
    <property type="project" value="SGD"/>
</dbReference>
<dbReference type="GO" id="GO:0031564">
    <property type="term" value="P:transcription antitermination"/>
    <property type="evidence" value="ECO:0000315"/>
    <property type="project" value="SGD"/>
</dbReference>
<dbReference type="GO" id="GO:0006366">
    <property type="term" value="P:transcription by RNA polymerase II"/>
    <property type="evidence" value="ECO:0000315"/>
    <property type="project" value="SGD"/>
</dbReference>
<dbReference type="GO" id="GO:0006368">
    <property type="term" value="P:transcription elongation by RNA polymerase II"/>
    <property type="evidence" value="ECO:0000318"/>
    <property type="project" value="GO_Central"/>
</dbReference>
<dbReference type="GO" id="GO:0140673">
    <property type="term" value="P:transcription elongation-coupled chromatin remodeling"/>
    <property type="evidence" value="ECO:0007669"/>
    <property type="project" value="InterPro"/>
</dbReference>
<dbReference type="CDD" id="cd09928">
    <property type="entry name" value="SH2_Cterm_SPT6_like"/>
    <property type="match status" value="1"/>
</dbReference>
<dbReference type="CDD" id="cd09918">
    <property type="entry name" value="SH2_Nterm_SPT6_like"/>
    <property type="match status" value="1"/>
</dbReference>
<dbReference type="FunFam" id="1.10.3500.10:FF:000011">
    <property type="entry name" value="Transcription elongation factor SPT6"/>
    <property type="match status" value="1"/>
</dbReference>
<dbReference type="FunFam" id="3.30.505.10:FF:000065">
    <property type="entry name" value="Transcription elongation factor SPT6"/>
    <property type="match status" value="1"/>
</dbReference>
<dbReference type="FunFam" id="3.30.505.10:FF:000105">
    <property type="entry name" value="Transcription elongation factor SPT6"/>
    <property type="match status" value="1"/>
</dbReference>
<dbReference type="FunFam" id="1.10.10.2740:FF:000002">
    <property type="entry name" value="Transcription elongation factor Spt6"/>
    <property type="match status" value="1"/>
</dbReference>
<dbReference type="FunFam" id="1.10.10.650:FF:000007">
    <property type="entry name" value="Transcription elongation factor Spt6"/>
    <property type="match status" value="1"/>
</dbReference>
<dbReference type="Gene3D" id="1.10.10.650">
    <property type="entry name" value="RuvA domain 2-like"/>
    <property type="match status" value="1"/>
</dbReference>
<dbReference type="Gene3D" id="3.30.505.10">
    <property type="entry name" value="SH2 domain"/>
    <property type="match status" value="2"/>
</dbReference>
<dbReference type="Gene3D" id="1.10.10.2740">
    <property type="entry name" value="Spt6, Death-like domain"/>
    <property type="match status" value="1"/>
</dbReference>
<dbReference type="Gene3D" id="1.10.150.850">
    <property type="entry name" value="Spt6, helix-hairpin-helix domain"/>
    <property type="match status" value="1"/>
</dbReference>
<dbReference type="Gene3D" id="1.10.3500.10">
    <property type="entry name" value="Tex N-terminal region-like"/>
    <property type="match status" value="2"/>
</dbReference>
<dbReference type="Gene3D" id="3.30.420.140">
    <property type="entry name" value="YqgF/RNase H-like domain"/>
    <property type="match status" value="1"/>
</dbReference>
<dbReference type="IDEAL" id="IID50042"/>
<dbReference type="InterPro" id="IPR012337">
    <property type="entry name" value="RNaseH-like_sf"/>
</dbReference>
<dbReference type="InterPro" id="IPR010994">
    <property type="entry name" value="RuvA_2-like"/>
</dbReference>
<dbReference type="InterPro" id="IPR000980">
    <property type="entry name" value="SH2"/>
</dbReference>
<dbReference type="InterPro" id="IPR036860">
    <property type="entry name" value="SH2_dom_sf"/>
</dbReference>
<dbReference type="InterPro" id="IPR049540">
    <property type="entry name" value="Spt6-like_S1"/>
</dbReference>
<dbReference type="InterPro" id="IPR028083">
    <property type="entry name" value="Spt6_acidic_N_dom"/>
</dbReference>
<dbReference type="InterPro" id="IPR042066">
    <property type="entry name" value="Spt6_death-like"/>
</dbReference>
<dbReference type="InterPro" id="IPR032706">
    <property type="entry name" value="Spt6_HHH"/>
</dbReference>
<dbReference type="InterPro" id="IPR028088">
    <property type="entry name" value="Spt6_HTH_DNA-bd_dom"/>
</dbReference>
<dbReference type="InterPro" id="IPR035420">
    <property type="entry name" value="Spt6_SH2"/>
</dbReference>
<dbReference type="InterPro" id="IPR035018">
    <property type="entry name" value="Spt6_SH2_C"/>
</dbReference>
<dbReference type="InterPro" id="IPR035019">
    <property type="entry name" value="Spt6_SH2_N"/>
</dbReference>
<dbReference type="InterPro" id="IPR028231">
    <property type="entry name" value="Spt6_YqgF"/>
</dbReference>
<dbReference type="InterPro" id="IPR055179">
    <property type="entry name" value="Tex-like_central_region"/>
</dbReference>
<dbReference type="InterPro" id="IPR023323">
    <property type="entry name" value="Tex-like_dom_sf"/>
</dbReference>
<dbReference type="InterPro" id="IPR023319">
    <property type="entry name" value="Tex-like_HTH_dom_sf"/>
</dbReference>
<dbReference type="InterPro" id="IPR017072">
    <property type="entry name" value="TF_Spt6"/>
</dbReference>
<dbReference type="InterPro" id="IPR006641">
    <property type="entry name" value="YqgF/RNaseH-like_dom"/>
</dbReference>
<dbReference type="InterPro" id="IPR037027">
    <property type="entry name" value="YqgF/RNaseH-like_dom_sf"/>
</dbReference>
<dbReference type="PANTHER" id="PTHR10145">
    <property type="entry name" value="TRANSCRIPTION ELONGATION FACTOR SPT6"/>
    <property type="match status" value="1"/>
</dbReference>
<dbReference type="PANTHER" id="PTHR10145:SF6">
    <property type="entry name" value="TRANSCRIPTION ELONGATION FACTOR SPT6"/>
    <property type="match status" value="1"/>
</dbReference>
<dbReference type="Pfam" id="PF14635">
    <property type="entry name" value="HHH_7"/>
    <property type="match status" value="1"/>
</dbReference>
<dbReference type="Pfam" id="PF14641">
    <property type="entry name" value="HTH_44"/>
    <property type="match status" value="1"/>
</dbReference>
<dbReference type="Pfam" id="PF14633">
    <property type="entry name" value="SH2_2"/>
    <property type="match status" value="1"/>
</dbReference>
<dbReference type="Pfam" id="PF14632">
    <property type="entry name" value="SPT6_acidic"/>
    <property type="match status" value="1"/>
</dbReference>
<dbReference type="Pfam" id="PF21710">
    <property type="entry name" value="Spt6_S1"/>
    <property type="match status" value="1"/>
</dbReference>
<dbReference type="Pfam" id="PF22706">
    <property type="entry name" value="Tex_central_region"/>
    <property type="match status" value="1"/>
</dbReference>
<dbReference type="Pfam" id="PF14639">
    <property type="entry name" value="YqgF"/>
    <property type="match status" value="1"/>
</dbReference>
<dbReference type="PIRSF" id="PIRSF036947">
    <property type="entry name" value="Spt6"/>
    <property type="match status" value="1"/>
</dbReference>
<dbReference type="SMART" id="SM00252">
    <property type="entry name" value="SH2"/>
    <property type="match status" value="1"/>
</dbReference>
<dbReference type="SMART" id="SM00732">
    <property type="entry name" value="YqgFc"/>
    <property type="match status" value="1"/>
</dbReference>
<dbReference type="SUPFAM" id="SSF53098">
    <property type="entry name" value="Ribonuclease H-like"/>
    <property type="match status" value="1"/>
</dbReference>
<dbReference type="SUPFAM" id="SSF47781">
    <property type="entry name" value="RuvA domain 2-like"/>
    <property type="match status" value="1"/>
</dbReference>
<dbReference type="SUPFAM" id="SSF55550">
    <property type="entry name" value="SH2 domain"/>
    <property type="match status" value="1"/>
</dbReference>
<dbReference type="SUPFAM" id="SSF158832">
    <property type="entry name" value="Tex N-terminal region-like"/>
    <property type="match status" value="1"/>
</dbReference>
<dbReference type="PROSITE" id="PS50001">
    <property type="entry name" value="SH2"/>
    <property type="match status" value="1"/>
</dbReference>
<evidence type="ECO:0000255" key="1"/>
<evidence type="ECO:0000255" key="2">
    <source>
        <dbReference type="PROSITE-ProRule" id="PRU00191"/>
    </source>
</evidence>
<evidence type="ECO:0000256" key="3">
    <source>
        <dbReference type="SAM" id="MobiDB-lite"/>
    </source>
</evidence>
<evidence type="ECO:0000269" key="4">
    <source>
    </source>
</evidence>
<evidence type="ECO:0000269" key="5">
    <source>
    </source>
</evidence>
<evidence type="ECO:0000269" key="6">
    <source>
    </source>
</evidence>
<evidence type="ECO:0000269" key="7">
    <source>
    </source>
</evidence>
<evidence type="ECO:0000269" key="8">
    <source>
    </source>
</evidence>
<evidence type="ECO:0000269" key="9">
    <source>
    </source>
</evidence>
<evidence type="ECO:0000269" key="10">
    <source>
    </source>
</evidence>
<evidence type="ECO:0000269" key="11">
    <source>
    </source>
</evidence>
<evidence type="ECO:0000305" key="12"/>
<evidence type="ECO:0007744" key="13">
    <source>
    </source>
</evidence>
<evidence type="ECO:0007744" key="14">
    <source>
    </source>
</evidence>
<evidence type="ECO:0007744" key="15">
    <source>
    </source>
</evidence>
<evidence type="ECO:0007744" key="16">
    <source>
    </source>
</evidence>
<evidence type="ECO:0007829" key="17">
    <source>
        <dbReference type="PDB" id="2L3T"/>
    </source>
</evidence>
<evidence type="ECO:0007829" key="18">
    <source>
        <dbReference type="PDB" id="3OAK"/>
    </source>
</evidence>
<evidence type="ECO:0007829" key="19">
    <source>
        <dbReference type="PDB" id="3PSF"/>
    </source>
</evidence>
<evidence type="ECO:0007829" key="20">
    <source>
        <dbReference type="PDB" id="3PSI"/>
    </source>
</evidence>
<evidence type="ECO:0007829" key="21">
    <source>
        <dbReference type="PDB" id="3PSK"/>
    </source>
</evidence>
<evidence type="ECO:0007829" key="22">
    <source>
        <dbReference type="PDB" id="5VKO"/>
    </source>
</evidence>
<comment type="function">
    <text evidence="4 7 8 11">Histone H3-H4 chaperone that plays a role in maintenance of chromatin structure during RNA polymerase II transcription elongation thereby repressing transcription initiation from cryptic promoters. Mediates the reassembly of nucleosomes onto the promoters of at least a selected set of genes during repression; the nucleosome reassembly is essential for transcriptional repression. Essential for viability.</text>
</comment>
<comment type="subunit">
    <text evidence="7">Interacts with CTR9.</text>
</comment>
<comment type="interaction">
    <interactant intactId="EBI-17947">
        <id>P23615</id>
    </interactant>
    <interactant intactId="EBI-32596">
        <id>Q06505</id>
        <label>SPN1</label>
    </interactant>
    <organismsDiffer>false</organismsDiffer>
    <experiments>8</experiments>
</comment>
<comment type="interaction">
    <interactant intactId="EBI-17947">
        <id>P23615</id>
    </interactant>
    <interactant intactId="EBI-17937">
        <id>P27692</id>
        <label>SPT5</label>
    </interactant>
    <organismsDiffer>false</organismsDiffer>
    <experiments>3</experiments>
</comment>
<comment type="subcellular location">
    <subcellularLocation>
        <location evidence="5 10">Nucleus</location>
    </subcellularLocation>
    <subcellularLocation>
        <location evidence="9">Chromosome</location>
    </subcellularLocation>
    <text evidence="9 10">Colocalizes with RNA polymerase II on chromatin (PubMed:2201908). Recruited to the active transcribed loci (PubMed:2201908). Associates with the coding region of HTA1 (PubMed:19683497).</text>
</comment>
<comment type="miscellaneous">
    <text evidence="6">Present with 8890 molecules/cell in log phase SD medium.</text>
</comment>
<comment type="similarity">
    <text evidence="12">Belongs to the SPT6 family.</text>
</comment>
<sequence length="1451" mass="168291">MEETGDSKLVPRDEEEIVNDNDETKAPSEEEEGEDVFDSSEEDEDIDEDEDEARKVQEGFIVNDDDENEDPGTSISKKRRKHKRREREEDDRLSEDDLDLLMENAGVERTKASSSSGKFKRLKRVGDEGNAAESESDNVAASRQDSTSKLEDFFSEDEEEEESGLRNGRNNEYGRDEEDHENRNRTADKGGILDELDDFIEDDEFSDEDDETRQRRIQEKKLLREQSIKQPTQITGLSSDKIDEMYDIFGDGHDYDWALEIENEELENGNDNNEAEEEEIDEETGAIKSTKKKISLQDIYDLEDLKKNLMTEGDMKIRKTDIPERYQELRAGITDYGNMSSEDQELERNWIAEKISVDKNFDANYDLTEFKEAIGNAIKFITKENLEVPFIYAYRRNYISSREKDGFLLTEDDLWDIVSLDIEFHSLVNKKDYVQRFYAELHIDDPIVTEYFKNQNTASIAELNSLQDIYDYLEFKYANEINEMFINHTGKTGKKHLKNSSYEKFKASPLYQAVSDIGISAEDVGENISSQHQIHPPVDHPSSKPVEVIESILNANSGDLQVFTSNTKLAIDTVQKYYSLELSKNTKIREKVRSDFSKYYLADVVLTAKGKKEIQKGSLYEDIKYAINRTPMHFRRDPDVFLKMVEAESLNLLSVKLHMSSQAQYIEHLFQIALETTNTSDIAIEWNNFRKLAFNQAMDKIFQDISQEVKDNLTKNCQKLVAKTVRHKFMTKLDQAPFIPNVRDPKIPKILSLTCGQGRFGADAIIAVYVNRKGDFIRDYKIVDNPFDKTNPEKFEDTLDNIIQSCQPNAIGINGPNPKTQKFYKRLQEVLHKKQIVDSRGHTIPIIYVEDEVAIRYQNSERAAQEFPNKPPLVKYCIALARYMHSPLLEYANLTSEEVRSLSIHPHQNLLSSEQLSWALETAFVDIVNLVSVEVNKATDNNYYASALKYISGFGKRKAIDFLQSLQRLNEPLLARQQLITHNILHKTIFMNSAGFLYISWNEKRQKYEDLEHDQLDSTRIHPEDYHLATKVAADALEYDPDTIAEKEEQGTMSEFIELLREDPDRRAKLESLNLESYAEELEKNTGLRKLNNLNTIVLELLDGFEELRNDFHPLQGDEIFQSLTGESEKTFFKGSIIPVRVERFWHNDIICTTNSEVECVVNAQRHAGAQLRRPANEIYEIGKTYPAKVIYIDYANITAEVSLLDHDVKQQYVPISYSKDPSIWDLKQELEDAEEERKLMMAEARAKRTHRVINHPYYFPFNGRQAEDYLRSKERGEFVIRQSSRGDDHLVITWKLDKDLFQHIDIQELEKENPLALGKVLIVDNQKYNDLDQIIVEYLQNKVRLLNEMTSSEKFKSGTKKDVVKFIEDYSRVNPNKSVYYFSLNHDNPGWFYLMFKINANSKLYTWNVKLTNTGYFLVNYNYPSVIQLCNGFKTLLKSNSSKNRMNNYR</sequence>
<proteinExistence type="evidence at protein level"/>
<organism>
    <name type="scientific">Saccharomyces cerevisiae (strain ATCC 204508 / S288c)</name>
    <name type="common">Baker's yeast</name>
    <dbReference type="NCBI Taxonomy" id="559292"/>
    <lineage>
        <taxon>Eukaryota</taxon>
        <taxon>Fungi</taxon>
        <taxon>Dikarya</taxon>
        <taxon>Ascomycota</taxon>
        <taxon>Saccharomycotina</taxon>
        <taxon>Saccharomycetes</taxon>
        <taxon>Saccharomycetales</taxon>
        <taxon>Saccharomycetaceae</taxon>
        <taxon>Saccharomyces</taxon>
    </lineage>
</organism>
<protein>
    <recommendedName>
        <fullName>Transcription elongation factor SPT6</fullName>
    </recommendedName>
    <alternativeName>
        <fullName>Chromatin elongation factor SPT6</fullName>
    </alternativeName>
</protein>
<keyword id="KW-0002">3D-structure</keyword>
<keyword id="KW-0158">Chromosome</keyword>
<keyword id="KW-0539">Nucleus</keyword>
<keyword id="KW-0597">Phosphoprotein</keyword>
<keyword id="KW-1185">Reference proteome</keyword>
<keyword id="KW-0727">SH2 domain</keyword>
<keyword id="KW-0804">Transcription</keyword>